<evidence type="ECO:0000250" key="1"/>
<evidence type="ECO:0000255" key="2">
    <source>
        <dbReference type="PROSITE-ProRule" id="PRU01082"/>
    </source>
</evidence>
<evidence type="ECO:0000303" key="3">
    <source>
    </source>
</evidence>
<evidence type="ECO:0000305" key="4"/>
<sequence length="282" mass="30584">MGYLSSVIPTDGSPVSGGGLSQNGKFSYGYASSPGKRASMEDFYETRIDSVDGQIIGLFGVFDGHGGAKVAEYVKQNLFSHLLRHPKFISDTKVAIDDAYKSTDSEFLESDSSQNQCGSTASTAVLVGDRLFVANVGDSRAIICRGGNAIAVSKDHKPDQTDERQRIEDAGGFVMWAGTWRVGGVLAVSRAFGDKLLKQYVVVDPEIREEVIDHSLEFLILASDGLWDVVTNEEAVDMTRSIHDPEEAAKKLLQEAYKRESSDNITCVVVRFLHGQGSSGYA</sequence>
<accession>Q7XR06</accession>
<accession>A0A0P0WFU4</accession>
<accession>Q0J9D6</accession>
<gene>
    <name type="ordered locus">Os04g0659500</name>
    <name type="ordered locus">LOC_Os04g56450</name>
    <name type="ORF">OsJ_015762</name>
    <name type="ORF">OSJNBa0011F23.20</name>
    <name type="ORF">OSJNBa0015K02.7</name>
</gene>
<feature type="chain" id="PRO_0000363292" description="Probable protein phosphatase 2C 45">
    <location>
        <begin position="1"/>
        <end position="282"/>
    </location>
</feature>
<feature type="domain" description="PPM-type phosphatase" evidence="2">
    <location>
        <begin position="27"/>
        <end position="272"/>
    </location>
</feature>
<feature type="binding site" evidence="1">
    <location>
        <position position="63"/>
    </location>
    <ligand>
        <name>Mn(2+)</name>
        <dbReference type="ChEBI" id="CHEBI:29035"/>
        <label>1</label>
    </ligand>
</feature>
<feature type="binding site" evidence="1">
    <location>
        <position position="63"/>
    </location>
    <ligand>
        <name>Mn(2+)</name>
        <dbReference type="ChEBI" id="CHEBI:29035"/>
        <label>2</label>
    </ligand>
</feature>
<feature type="binding site" evidence="1">
    <location>
        <position position="64"/>
    </location>
    <ligand>
        <name>Mn(2+)</name>
        <dbReference type="ChEBI" id="CHEBI:29035"/>
        <label>1</label>
    </ligand>
</feature>
<feature type="binding site" evidence="1">
    <location>
        <position position="224"/>
    </location>
    <ligand>
        <name>Mn(2+)</name>
        <dbReference type="ChEBI" id="CHEBI:29035"/>
        <label>2</label>
    </ligand>
</feature>
<feature type="binding site" evidence="1">
    <location>
        <position position="263"/>
    </location>
    <ligand>
        <name>Mn(2+)</name>
        <dbReference type="ChEBI" id="CHEBI:29035"/>
        <label>2</label>
    </ligand>
</feature>
<feature type="splice variant" id="VSP_036269" description="In isoform 2." evidence="3">
    <location>
        <begin position="25"/>
        <end position="64"/>
    </location>
</feature>
<protein>
    <recommendedName>
        <fullName>Probable protein phosphatase 2C 45</fullName>
        <shortName>OsPP2C45</shortName>
        <ecNumber>3.1.3.16</ecNumber>
    </recommendedName>
</protein>
<proteinExistence type="evidence at transcript level"/>
<name>P2C45_ORYSJ</name>
<reference key="1">
    <citation type="journal article" date="2002" name="Nature">
        <title>Sequence and analysis of rice chromosome 4.</title>
        <authorList>
            <person name="Feng Q."/>
            <person name="Zhang Y."/>
            <person name="Hao P."/>
            <person name="Wang S."/>
            <person name="Fu G."/>
            <person name="Huang Y."/>
            <person name="Li Y."/>
            <person name="Zhu J."/>
            <person name="Liu Y."/>
            <person name="Hu X."/>
            <person name="Jia P."/>
            <person name="Zhang Y."/>
            <person name="Zhao Q."/>
            <person name="Ying K."/>
            <person name="Yu S."/>
            <person name="Tang Y."/>
            <person name="Weng Q."/>
            <person name="Zhang L."/>
            <person name="Lu Y."/>
            <person name="Mu J."/>
            <person name="Lu Y."/>
            <person name="Zhang L.S."/>
            <person name="Yu Z."/>
            <person name="Fan D."/>
            <person name="Liu X."/>
            <person name="Lu T."/>
            <person name="Li C."/>
            <person name="Wu Y."/>
            <person name="Sun T."/>
            <person name="Lei H."/>
            <person name="Li T."/>
            <person name="Hu H."/>
            <person name="Guan J."/>
            <person name="Wu M."/>
            <person name="Zhang R."/>
            <person name="Zhou B."/>
            <person name="Chen Z."/>
            <person name="Chen L."/>
            <person name="Jin Z."/>
            <person name="Wang R."/>
            <person name="Yin H."/>
            <person name="Cai Z."/>
            <person name="Ren S."/>
            <person name="Lv G."/>
            <person name="Gu W."/>
            <person name="Zhu G."/>
            <person name="Tu Y."/>
            <person name="Jia J."/>
            <person name="Zhang Y."/>
            <person name="Chen J."/>
            <person name="Kang H."/>
            <person name="Chen X."/>
            <person name="Shao C."/>
            <person name="Sun Y."/>
            <person name="Hu Q."/>
            <person name="Zhang X."/>
            <person name="Zhang W."/>
            <person name="Wang L."/>
            <person name="Ding C."/>
            <person name="Sheng H."/>
            <person name="Gu J."/>
            <person name="Chen S."/>
            <person name="Ni L."/>
            <person name="Zhu F."/>
            <person name="Chen W."/>
            <person name="Lan L."/>
            <person name="Lai Y."/>
            <person name="Cheng Z."/>
            <person name="Gu M."/>
            <person name="Jiang J."/>
            <person name="Li J."/>
            <person name="Hong G."/>
            <person name="Xue Y."/>
            <person name="Han B."/>
        </authorList>
    </citation>
    <scope>NUCLEOTIDE SEQUENCE [LARGE SCALE GENOMIC DNA]</scope>
    <source>
        <strain>cv. Nipponbare</strain>
    </source>
</reference>
<reference key="2">
    <citation type="journal article" date="2005" name="Nature">
        <title>The map-based sequence of the rice genome.</title>
        <authorList>
            <consortium name="International rice genome sequencing project (IRGSP)"/>
        </authorList>
    </citation>
    <scope>NUCLEOTIDE SEQUENCE [LARGE SCALE GENOMIC DNA]</scope>
    <source>
        <strain>cv. Nipponbare</strain>
    </source>
</reference>
<reference key="3">
    <citation type="journal article" date="2008" name="Nucleic Acids Res.">
        <title>The rice annotation project database (RAP-DB): 2008 update.</title>
        <authorList>
            <consortium name="The rice annotation project (RAP)"/>
        </authorList>
    </citation>
    <scope>GENOME REANNOTATION</scope>
    <source>
        <strain>cv. Nipponbare</strain>
    </source>
</reference>
<reference key="4">
    <citation type="journal article" date="2013" name="Rice">
        <title>Improvement of the Oryza sativa Nipponbare reference genome using next generation sequence and optical map data.</title>
        <authorList>
            <person name="Kawahara Y."/>
            <person name="de la Bastide M."/>
            <person name="Hamilton J.P."/>
            <person name="Kanamori H."/>
            <person name="McCombie W.R."/>
            <person name="Ouyang S."/>
            <person name="Schwartz D.C."/>
            <person name="Tanaka T."/>
            <person name="Wu J."/>
            <person name="Zhou S."/>
            <person name="Childs K.L."/>
            <person name="Davidson R.M."/>
            <person name="Lin H."/>
            <person name="Quesada-Ocampo L."/>
            <person name="Vaillancourt B."/>
            <person name="Sakai H."/>
            <person name="Lee S.S."/>
            <person name="Kim J."/>
            <person name="Numa H."/>
            <person name="Itoh T."/>
            <person name="Buell C.R."/>
            <person name="Matsumoto T."/>
        </authorList>
    </citation>
    <scope>GENOME REANNOTATION</scope>
    <source>
        <strain>cv. Nipponbare</strain>
    </source>
</reference>
<reference key="5">
    <citation type="journal article" date="2005" name="PLoS Biol.">
        <title>The genomes of Oryza sativa: a history of duplications.</title>
        <authorList>
            <person name="Yu J."/>
            <person name="Wang J."/>
            <person name="Lin W."/>
            <person name="Li S."/>
            <person name="Li H."/>
            <person name="Zhou J."/>
            <person name="Ni P."/>
            <person name="Dong W."/>
            <person name="Hu S."/>
            <person name="Zeng C."/>
            <person name="Zhang J."/>
            <person name="Zhang Y."/>
            <person name="Li R."/>
            <person name="Xu Z."/>
            <person name="Li S."/>
            <person name="Li X."/>
            <person name="Zheng H."/>
            <person name="Cong L."/>
            <person name="Lin L."/>
            <person name="Yin J."/>
            <person name="Geng J."/>
            <person name="Li G."/>
            <person name="Shi J."/>
            <person name="Liu J."/>
            <person name="Lv H."/>
            <person name="Li J."/>
            <person name="Wang J."/>
            <person name="Deng Y."/>
            <person name="Ran L."/>
            <person name="Shi X."/>
            <person name="Wang X."/>
            <person name="Wu Q."/>
            <person name="Li C."/>
            <person name="Ren X."/>
            <person name="Wang J."/>
            <person name="Wang X."/>
            <person name="Li D."/>
            <person name="Liu D."/>
            <person name="Zhang X."/>
            <person name="Ji Z."/>
            <person name="Zhao W."/>
            <person name="Sun Y."/>
            <person name="Zhang Z."/>
            <person name="Bao J."/>
            <person name="Han Y."/>
            <person name="Dong L."/>
            <person name="Ji J."/>
            <person name="Chen P."/>
            <person name="Wu S."/>
            <person name="Liu J."/>
            <person name="Xiao Y."/>
            <person name="Bu D."/>
            <person name="Tan J."/>
            <person name="Yang L."/>
            <person name="Ye C."/>
            <person name="Zhang J."/>
            <person name="Xu J."/>
            <person name="Zhou Y."/>
            <person name="Yu Y."/>
            <person name="Zhang B."/>
            <person name="Zhuang S."/>
            <person name="Wei H."/>
            <person name="Liu B."/>
            <person name="Lei M."/>
            <person name="Yu H."/>
            <person name="Li Y."/>
            <person name="Xu H."/>
            <person name="Wei S."/>
            <person name="He X."/>
            <person name="Fang L."/>
            <person name="Zhang Z."/>
            <person name="Zhang Y."/>
            <person name="Huang X."/>
            <person name="Su Z."/>
            <person name="Tong W."/>
            <person name="Li J."/>
            <person name="Tong Z."/>
            <person name="Li S."/>
            <person name="Ye J."/>
            <person name="Wang L."/>
            <person name="Fang L."/>
            <person name="Lei T."/>
            <person name="Chen C.-S."/>
            <person name="Chen H.-C."/>
            <person name="Xu Z."/>
            <person name="Li H."/>
            <person name="Huang H."/>
            <person name="Zhang F."/>
            <person name="Xu H."/>
            <person name="Li N."/>
            <person name="Zhao C."/>
            <person name="Li S."/>
            <person name="Dong L."/>
            <person name="Huang Y."/>
            <person name="Li L."/>
            <person name="Xi Y."/>
            <person name="Qi Q."/>
            <person name="Li W."/>
            <person name="Zhang B."/>
            <person name="Hu W."/>
            <person name="Zhang Y."/>
            <person name="Tian X."/>
            <person name="Jiao Y."/>
            <person name="Liang X."/>
            <person name="Jin J."/>
            <person name="Gao L."/>
            <person name="Zheng W."/>
            <person name="Hao B."/>
            <person name="Liu S.-M."/>
            <person name="Wang W."/>
            <person name="Yuan L."/>
            <person name="Cao M."/>
            <person name="McDermott J."/>
            <person name="Samudrala R."/>
            <person name="Wang J."/>
            <person name="Wong G.K.-S."/>
            <person name="Yang H."/>
        </authorList>
    </citation>
    <scope>NUCLEOTIDE SEQUENCE [LARGE SCALE GENOMIC DNA]</scope>
    <source>
        <strain>cv. Nipponbare</strain>
    </source>
</reference>
<reference key="6">
    <citation type="journal article" date="2003" name="Science">
        <title>Collection, mapping, and annotation of over 28,000 cDNA clones from japonica rice.</title>
        <authorList>
            <consortium name="The rice full-length cDNA consortium"/>
        </authorList>
    </citation>
    <scope>NUCLEOTIDE SEQUENCE [LARGE SCALE MRNA] (ISOFORMS 1 AND 2)</scope>
    <source>
        <strain>cv. Nipponbare</strain>
    </source>
</reference>
<reference key="7">
    <citation type="journal article" date="2008" name="BMC Genomics">
        <title>Genome-wide and expression analysis of protein phosphatase 2C in rice and Arabidopsis.</title>
        <authorList>
            <person name="Xue T."/>
            <person name="Wang D."/>
            <person name="Zhang S."/>
            <person name="Ehlting J."/>
            <person name="Ni F."/>
            <person name="Jacab S."/>
            <person name="Zheng C."/>
            <person name="Zhong Y."/>
        </authorList>
    </citation>
    <scope>GENE FAMILY</scope>
    <scope>NOMENCLATURE</scope>
</reference>
<organism>
    <name type="scientific">Oryza sativa subsp. japonica</name>
    <name type="common">Rice</name>
    <dbReference type="NCBI Taxonomy" id="39947"/>
    <lineage>
        <taxon>Eukaryota</taxon>
        <taxon>Viridiplantae</taxon>
        <taxon>Streptophyta</taxon>
        <taxon>Embryophyta</taxon>
        <taxon>Tracheophyta</taxon>
        <taxon>Spermatophyta</taxon>
        <taxon>Magnoliopsida</taxon>
        <taxon>Liliopsida</taxon>
        <taxon>Poales</taxon>
        <taxon>Poaceae</taxon>
        <taxon>BOP clade</taxon>
        <taxon>Oryzoideae</taxon>
        <taxon>Oryzeae</taxon>
        <taxon>Oryzinae</taxon>
        <taxon>Oryza</taxon>
        <taxon>Oryza sativa</taxon>
    </lineage>
</organism>
<dbReference type="EC" id="3.1.3.16"/>
<dbReference type="EMBL" id="AL606608">
    <property type="protein sequence ID" value="CAE02890.2"/>
    <property type="molecule type" value="Genomic_DNA"/>
</dbReference>
<dbReference type="EMBL" id="AL662953">
    <property type="protein sequence ID" value="CAE54579.1"/>
    <property type="molecule type" value="Genomic_DNA"/>
</dbReference>
<dbReference type="EMBL" id="AP008210">
    <property type="protein sequence ID" value="BAF16051.1"/>
    <property type="molecule type" value="Genomic_DNA"/>
</dbReference>
<dbReference type="EMBL" id="AP014960">
    <property type="protein sequence ID" value="BAS91437.1"/>
    <property type="molecule type" value="Genomic_DNA"/>
</dbReference>
<dbReference type="EMBL" id="AP014960">
    <property type="protein sequence ID" value="BAS91438.1"/>
    <property type="molecule type" value="Genomic_DNA"/>
</dbReference>
<dbReference type="EMBL" id="CM000141">
    <property type="protein sequence ID" value="EAZ32279.1"/>
    <property type="molecule type" value="Genomic_DNA"/>
</dbReference>
<dbReference type="EMBL" id="AK059302">
    <property type="protein sequence ID" value="BAG86954.1"/>
    <property type="molecule type" value="mRNA"/>
</dbReference>
<dbReference type="EMBL" id="AK072534">
    <property type="protein sequence ID" value="BAG93020.1"/>
    <property type="molecule type" value="mRNA"/>
</dbReference>
<dbReference type="RefSeq" id="XP_015635325.1">
    <property type="nucleotide sequence ID" value="XM_015779839.1"/>
</dbReference>
<dbReference type="SMR" id="Q7XR06"/>
<dbReference type="FunCoup" id="Q7XR06">
    <property type="interactions" value="270"/>
</dbReference>
<dbReference type="STRING" id="39947.Q7XR06"/>
<dbReference type="PaxDb" id="39947-Q7XR06"/>
<dbReference type="EnsemblPlants" id="Os04t0659500-02">
    <molecule id="Q7XR06-1"/>
    <property type="protein sequence ID" value="Os04t0659500-02"/>
    <property type="gene ID" value="Os04g0659500"/>
</dbReference>
<dbReference type="Gramene" id="Os04t0659500-02">
    <molecule id="Q7XR06-1"/>
    <property type="protein sequence ID" value="Os04t0659500-02"/>
    <property type="gene ID" value="Os04g0659500"/>
</dbReference>
<dbReference type="KEGG" id="dosa:Os04g0659500"/>
<dbReference type="eggNOG" id="KOG0698">
    <property type="taxonomic scope" value="Eukaryota"/>
</dbReference>
<dbReference type="HOGENOM" id="CLU_013173_0_5_1"/>
<dbReference type="InParanoid" id="Q7XR06"/>
<dbReference type="OMA" id="PMTDERM"/>
<dbReference type="OrthoDB" id="10264738at2759"/>
<dbReference type="Proteomes" id="UP000000763">
    <property type="component" value="Chromosome 4"/>
</dbReference>
<dbReference type="Proteomes" id="UP000007752">
    <property type="component" value="Chromosome 4"/>
</dbReference>
<dbReference type="Proteomes" id="UP000059680">
    <property type="component" value="Chromosome 4"/>
</dbReference>
<dbReference type="GO" id="GO:0046872">
    <property type="term" value="F:metal ion binding"/>
    <property type="evidence" value="ECO:0007669"/>
    <property type="project" value="UniProtKB-KW"/>
</dbReference>
<dbReference type="GO" id="GO:0004722">
    <property type="term" value="F:protein serine/threonine phosphatase activity"/>
    <property type="evidence" value="ECO:0000318"/>
    <property type="project" value="GO_Central"/>
</dbReference>
<dbReference type="GO" id="GO:1902531">
    <property type="term" value="P:regulation of intracellular signal transduction"/>
    <property type="evidence" value="ECO:0000318"/>
    <property type="project" value="GO_Central"/>
</dbReference>
<dbReference type="CDD" id="cd00143">
    <property type="entry name" value="PP2Cc"/>
    <property type="match status" value="1"/>
</dbReference>
<dbReference type="FunFam" id="3.60.40.10:FF:000011">
    <property type="entry name" value="probable protein phosphatase 2C 59"/>
    <property type="match status" value="1"/>
</dbReference>
<dbReference type="Gene3D" id="3.60.40.10">
    <property type="entry name" value="PPM-type phosphatase domain"/>
    <property type="match status" value="1"/>
</dbReference>
<dbReference type="InterPro" id="IPR015655">
    <property type="entry name" value="PP2C"/>
</dbReference>
<dbReference type="InterPro" id="IPR000222">
    <property type="entry name" value="PP2C_BS"/>
</dbReference>
<dbReference type="InterPro" id="IPR036457">
    <property type="entry name" value="PPM-type-like_dom_sf"/>
</dbReference>
<dbReference type="InterPro" id="IPR001932">
    <property type="entry name" value="PPM-type_phosphatase-like_dom"/>
</dbReference>
<dbReference type="PANTHER" id="PTHR47992">
    <property type="entry name" value="PROTEIN PHOSPHATASE"/>
    <property type="match status" value="1"/>
</dbReference>
<dbReference type="Pfam" id="PF00481">
    <property type="entry name" value="PP2C"/>
    <property type="match status" value="1"/>
</dbReference>
<dbReference type="SMART" id="SM00332">
    <property type="entry name" value="PP2Cc"/>
    <property type="match status" value="1"/>
</dbReference>
<dbReference type="SUPFAM" id="SSF81606">
    <property type="entry name" value="PP2C-like"/>
    <property type="match status" value="1"/>
</dbReference>
<dbReference type="PROSITE" id="PS01032">
    <property type="entry name" value="PPM_1"/>
    <property type="match status" value="1"/>
</dbReference>
<dbReference type="PROSITE" id="PS51746">
    <property type="entry name" value="PPM_2"/>
    <property type="match status" value="1"/>
</dbReference>
<comment type="catalytic activity">
    <reaction>
        <text>O-phospho-L-seryl-[protein] + H2O = L-seryl-[protein] + phosphate</text>
        <dbReference type="Rhea" id="RHEA:20629"/>
        <dbReference type="Rhea" id="RHEA-COMP:9863"/>
        <dbReference type="Rhea" id="RHEA-COMP:11604"/>
        <dbReference type="ChEBI" id="CHEBI:15377"/>
        <dbReference type="ChEBI" id="CHEBI:29999"/>
        <dbReference type="ChEBI" id="CHEBI:43474"/>
        <dbReference type="ChEBI" id="CHEBI:83421"/>
        <dbReference type="EC" id="3.1.3.16"/>
    </reaction>
</comment>
<comment type="catalytic activity">
    <reaction>
        <text>O-phospho-L-threonyl-[protein] + H2O = L-threonyl-[protein] + phosphate</text>
        <dbReference type="Rhea" id="RHEA:47004"/>
        <dbReference type="Rhea" id="RHEA-COMP:11060"/>
        <dbReference type="Rhea" id="RHEA-COMP:11605"/>
        <dbReference type="ChEBI" id="CHEBI:15377"/>
        <dbReference type="ChEBI" id="CHEBI:30013"/>
        <dbReference type="ChEBI" id="CHEBI:43474"/>
        <dbReference type="ChEBI" id="CHEBI:61977"/>
        <dbReference type="EC" id="3.1.3.16"/>
    </reaction>
</comment>
<comment type="cofactor">
    <cofactor evidence="1">
        <name>Mg(2+)</name>
        <dbReference type="ChEBI" id="CHEBI:18420"/>
    </cofactor>
    <cofactor evidence="1">
        <name>Mn(2+)</name>
        <dbReference type="ChEBI" id="CHEBI:29035"/>
    </cofactor>
    <text evidence="1">Binds 2 magnesium or manganese ions per subunit.</text>
</comment>
<comment type="alternative products">
    <event type="alternative splicing"/>
    <isoform>
        <id>Q7XR06-1</id>
        <name>1</name>
        <sequence type="displayed"/>
    </isoform>
    <isoform>
        <id>Q7XR06-2</id>
        <name>2</name>
        <sequence type="described" ref="VSP_036269"/>
    </isoform>
</comment>
<comment type="similarity">
    <text evidence="4">Belongs to the PP2C family.</text>
</comment>
<keyword id="KW-0025">Alternative splicing</keyword>
<keyword id="KW-0378">Hydrolase</keyword>
<keyword id="KW-0460">Magnesium</keyword>
<keyword id="KW-0464">Manganese</keyword>
<keyword id="KW-0479">Metal-binding</keyword>
<keyword id="KW-0904">Protein phosphatase</keyword>
<keyword id="KW-1185">Reference proteome</keyword>